<evidence type="ECO:0000250" key="1"/>
<evidence type="ECO:0000255" key="2"/>
<evidence type="ECO:0000305" key="3"/>
<gene>
    <name type="primary">mmetS</name>
    <name type="ORF">DDB_G0285759</name>
</gene>
<accession>Q54MZ8</accession>
<proteinExistence type="inferred from homology"/>
<reference key="1">
    <citation type="journal article" date="2005" name="Nature">
        <title>The genome of the social amoeba Dictyostelium discoideum.</title>
        <authorList>
            <person name="Eichinger L."/>
            <person name="Pachebat J.A."/>
            <person name="Gloeckner G."/>
            <person name="Rajandream M.A."/>
            <person name="Sucgang R."/>
            <person name="Berriman M."/>
            <person name="Song J."/>
            <person name="Olsen R."/>
            <person name="Szafranski K."/>
            <person name="Xu Q."/>
            <person name="Tunggal B."/>
            <person name="Kummerfeld S."/>
            <person name="Madera M."/>
            <person name="Konfortov B.A."/>
            <person name="Rivero F."/>
            <person name="Bankier A.T."/>
            <person name="Lehmann R."/>
            <person name="Hamlin N."/>
            <person name="Davies R."/>
            <person name="Gaudet P."/>
            <person name="Fey P."/>
            <person name="Pilcher K."/>
            <person name="Chen G."/>
            <person name="Saunders D."/>
            <person name="Sodergren E.J."/>
            <person name="Davis P."/>
            <person name="Kerhornou A."/>
            <person name="Nie X."/>
            <person name="Hall N."/>
            <person name="Anjard C."/>
            <person name="Hemphill L."/>
            <person name="Bason N."/>
            <person name="Farbrother P."/>
            <person name="Desany B."/>
            <person name="Just E."/>
            <person name="Morio T."/>
            <person name="Rost R."/>
            <person name="Churcher C.M."/>
            <person name="Cooper J."/>
            <person name="Haydock S."/>
            <person name="van Driessche N."/>
            <person name="Cronin A."/>
            <person name="Goodhead I."/>
            <person name="Muzny D.M."/>
            <person name="Mourier T."/>
            <person name="Pain A."/>
            <person name="Lu M."/>
            <person name="Harper D."/>
            <person name="Lindsay R."/>
            <person name="Hauser H."/>
            <person name="James K.D."/>
            <person name="Quiles M."/>
            <person name="Madan Babu M."/>
            <person name="Saito T."/>
            <person name="Buchrieser C."/>
            <person name="Wardroper A."/>
            <person name="Felder M."/>
            <person name="Thangavelu M."/>
            <person name="Johnson D."/>
            <person name="Knights A."/>
            <person name="Loulseged H."/>
            <person name="Mungall K.L."/>
            <person name="Oliver K."/>
            <person name="Price C."/>
            <person name="Quail M.A."/>
            <person name="Urushihara H."/>
            <person name="Hernandez J."/>
            <person name="Rabbinowitsch E."/>
            <person name="Steffen D."/>
            <person name="Sanders M."/>
            <person name="Ma J."/>
            <person name="Kohara Y."/>
            <person name="Sharp S."/>
            <person name="Simmonds M.N."/>
            <person name="Spiegler S."/>
            <person name="Tivey A."/>
            <person name="Sugano S."/>
            <person name="White B."/>
            <person name="Walker D."/>
            <person name="Woodward J.R."/>
            <person name="Winckler T."/>
            <person name="Tanaka Y."/>
            <person name="Shaulsky G."/>
            <person name="Schleicher M."/>
            <person name="Weinstock G.M."/>
            <person name="Rosenthal A."/>
            <person name="Cox E.C."/>
            <person name="Chisholm R.L."/>
            <person name="Gibbs R.A."/>
            <person name="Loomis W.F."/>
            <person name="Platzer M."/>
            <person name="Kay R.R."/>
            <person name="Williams J.G."/>
            <person name="Dear P.H."/>
            <person name="Noegel A.A."/>
            <person name="Barrell B.G."/>
            <person name="Kuspa A."/>
        </authorList>
    </citation>
    <scope>NUCLEOTIDE SEQUENCE [LARGE SCALE GENOMIC DNA]</scope>
    <source>
        <strain>AX4</strain>
    </source>
</reference>
<comment type="catalytic activity">
    <reaction>
        <text>tRNA(Met) + L-methionine + ATP = L-methionyl-tRNA(Met) + AMP + diphosphate</text>
        <dbReference type="Rhea" id="RHEA:13481"/>
        <dbReference type="Rhea" id="RHEA-COMP:9667"/>
        <dbReference type="Rhea" id="RHEA-COMP:9698"/>
        <dbReference type="ChEBI" id="CHEBI:30616"/>
        <dbReference type="ChEBI" id="CHEBI:33019"/>
        <dbReference type="ChEBI" id="CHEBI:57844"/>
        <dbReference type="ChEBI" id="CHEBI:78442"/>
        <dbReference type="ChEBI" id="CHEBI:78530"/>
        <dbReference type="ChEBI" id="CHEBI:456215"/>
        <dbReference type="EC" id="6.1.1.10"/>
    </reaction>
</comment>
<comment type="subcellular location">
    <subcellularLocation>
        <location evidence="1">Mitochondrion matrix</location>
    </subcellularLocation>
</comment>
<comment type="similarity">
    <text evidence="3">Belongs to the class-I aminoacyl-tRNA synthetase family.</text>
</comment>
<dbReference type="EC" id="6.1.1.10"/>
<dbReference type="EMBL" id="AAFI02000079">
    <property type="protein sequence ID" value="EAL64717.1"/>
    <property type="molecule type" value="Genomic_DNA"/>
</dbReference>
<dbReference type="RefSeq" id="XP_638145.1">
    <property type="nucleotide sequence ID" value="XM_633053.1"/>
</dbReference>
<dbReference type="SMR" id="Q54MZ8"/>
<dbReference type="FunCoup" id="Q54MZ8">
    <property type="interactions" value="610"/>
</dbReference>
<dbReference type="STRING" id="44689.Q54MZ8"/>
<dbReference type="PaxDb" id="44689-DDB0231296"/>
<dbReference type="EnsemblProtists" id="EAL64717">
    <property type="protein sequence ID" value="EAL64717"/>
    <property type="gene ID" value="DDB_G0285759"/>
</dbReference>
<dbReference type="GeneID" id="8625193"/>
<dbReference type="KEGG" id="ddi:DDB_G0285759"/>
<dbReference type="dictyBase" id="DDB_G0285759">
    <property type="gene designation" value="mmetS"/>
</dbReference>
<dbReference type="VEuPathDB" id="AmoebaDB:DDB_G0285759"/>
<dbReference type="eggNOG" id="KOG0436">
    <property type="taxonomic scope" value="Eukaryota"/>
</dbReference>
<dbReference type="HOGENOM" id="CLU_009710_9_0_1"/>
<dbReference type="InParanoid" id="Q54MZ8"/>
<dbReference type="OMA" id="NMFLPDR"/>
<dbReference type="PhylomeDB" id="Q54MZ8"/>
<dbReference type="PRO" id="PR:Q54MZ8"/>
<dbReference type="Proteomes" id="UP000002195">
    <property type="component" value="Chromosome 4"/>
</dbReference>
<dbReference type="GO" id="GO:0005759">
    <property type="term" value="C:mitochondrial matrix"/>
    <property type="evidence" value="ECO:0007669"/>
    <property type="project" value="UniProtKB-SubCell"/>
</dbReference>
<dbReference type="GO" id="GO:0005739">
    <property type="term" value="C:mitochondrion"/>
    <property type="evidence" value="ECO:0000250"/>
    <property type="project" value="dictyBase"/>
</dbReference>
<dbReference type="GO" id="GO:0005524">
    <property type="term" value="F:ATP binding"/>
    <property type="evidence" value="ECO:0007669"/>
    <property type="project" value="UniProtKB-KW"/>
</dbReference>
<dbReference type="GO" id="GO:0004825">
    <property type="term" value="F:methionine-tRNA ligase activity"/>
    <property type="evidence" value="ECO:0000250"/>
    <property type="project" value="dictyBase"/>
</dbReference>
<dbReference type="GO" id="GO:0006431">
    <property type="term" value="P:methionyl-tRNA aminoacylation"/>
    <property type="evidence" value="ECO:0000250"/>
    <property type="project" value="dictyBase"/>
</dbReference>
<dbReference type="CDD" id="cd07957">
    <property type="entry name" value="Anticodon_Ia_Met"/>
    <property type="match status" value="1"/>
</dbReference>
<dbReference type="CDD" id="cd00814">
    <property type="entry name" value="MetRS_core"/>
    <property type="match status" value="1"/>
</dbReference>
<dbReference type="FunFam" id="2.170.220.10:FF:000001">
    <property type="entry name" value="methionine--tRNA ligase, mitochondrial"/>
    <property type="match status" value="1"/>
</dbReference>
<dbReference type="FunFam" id="1.10.730.10:FF:000133">
    <property type="entry name" value="Probable methionine--tRNA ligase, mitochondrial"/>
    <property type="match status" value="1"/>
</dbReference>
<dbReference type="Gene3D" id="2.170.220.10">
    <property type="match status" value="1"/>
</dbReference>
<dbReference type="Gene3D" id="3.40.50.620">
    <property type="entry name" value="HUPs"/>
    <property type="match status" value="1"/>
</dbReference>
<dbReference type="Gene3D" id="1.10.730.10">
    <property type="entry name" value="Isoleucyl-tRNA Synthetase, Domain 1"/>
    <property type="match status" value="1"/>
</dbReference>
<dbReference type="InterPro" id="IPR041872">
    <property type="entry name" value="Anticodon_Met"/>
</dbReference>
<dbReference type="InterPro" id="IPR014758">
    <property type="entry name" value="Met-tRNA_synth"/>
</dbReference>
<dbReference type="InterPro" id="IPR023457">
    <property type="entry name" value="Met-tRNA_synth_2"/>
</dbReference>
<dbReference type="InterPro" id="IPR015413">
    <property type="entry name" value="Methionyl/Leucyl_tRNA_Synth"/>
</dbReference>
<dbReference type="InterPro" id="IPR033911">
    <property type="entry name" value="MetRS_core"/>
</dbReference>
<dbReference type="InterPro" id="IPR014729">
    <property type="entry name" value="Rossmann-like_a/b/a_fold"/>
</dbReference>
<dbReference type="InterPro" id="IPR009080">
    <property type="entry name" value="tRNAsynth_Ia_anticodon-bd"/>
</dbReference>
<dbReference type="NCBIfam" id="TIGR00398">
    <property type="entry name" value="metG"/>
    <property type="match status" value="1"/>
</dbReference>
<dbReference type="PANTHER" id="PTHR43326:SF1">
    <property type="entry name" value="METHIONINE--TRNA LIGASE, MITOCHONDRIAL"/>
    <property type="match status" value="1"/>
</dbReference>
<dbReference type="PANTHER" id="PTHR43326">
    <property type="entry name" value="METHIONYL-TRNA SYNTHETASE"/>
    <property type="match status" value="1"/>
</dbReference>
<dbReference type="Pfam" id="PF19303">
    <property type="entry name" value="Anticodon_3"/>
    <property type="match status" value="1"/>
</dbReference>
<dbReference type="Pfam" id="PF09334">
    <property type="entry name" value="tRNA-synt_1g"/>
    <property type="match status" value="1"/>
</dbReference>
<dbReference type="PRINTS" id="PR01041">
    <property type="entry name" value="TRNASYNTHMET"/>
</dbReference>
<dbReference type="SUPFAM" id="SSF47323">
    <property type="entry name" value="Anticodon-binding domain of a subclass of class I aminoacyl-tRNA synthetases"/>
    <property type="match status" value="1"/>
</dbReference>
<dbReference type="SUPFAM" id="SSF52374">
    <property type="entry name" value="Nucleotidylyl transferase"/>
    <property type="match status" value="1"/>
</dbReference>
<organism>
    <name type="scientific">Dictyostelium discoideum</name>
    <name type="common">Social amoeba</name>
    <dbReference type="NCBI Taxonomy" id="44689"/>
    <lineage>
        <taxon>Eukaryota</taxon>
        <taxon>Amoebozoa</taxon>
        <taxon>Evosea</taxon>
        <taxon>Eumycetozoa</taxon>
        <taxon>Dictyostelia</taxon>
        <taxon>Dictyosteliales</taxon>
        <taxon>Dictyosteliaceae</taxon>
        <taxon>Dictyostelium</taxon>
    </lineage>
</organism>
<name>SYMM_DICDI</name>
<protein>
    <recommendedName>
        <fullName>Probable methionine--tRNA ligase, mitochondrial</fullName>
        <ecNumber>6.1.1.10</ecNumber>
    </recommendedName>
    <alternativeName>
        <fullName>Mitochondrial methionyl-tRNA synthetase</fullName>
        <shortName>MtMetRS</shortName>
    </alternativeName>
</protein>
<sequence length="575" mass="65877">MLKLLKQISTTSTFKKPSSINNGFININLFKNYCTSVKQEDKKKVLITTPIFYVNGPPHIGHLYSALLGDALGRWNRFIGNDTLFMTGTDEHGSKVDEAAKKNGLKTIDYCDKISNRFRELFDKADIKYDDFIRTTEPRHKEAVTAIWNRLLERGYIYKGVYKGWYCTSDESFLTDDQVTEGMSPITPQNPISKKCMISLESGHEVNWIEEENYMFKLSEFSKTIENWFEEVKPIFPAIHVNLLRYMLSQGIKDLSISRPSSRIPWGIEVPNDPSQTIYVWLDALTNYLTVTGYPNVSPNSSQSHWSNATHIIGKDIIKFHSVYWPSFLIAADYPLPKSIICHAHWTVNREKMSKSRGNVVDPFLAIDNHGLELIRYFLLKGGGLENDGDWSEHELAVRFKSDLADTYGNLISRCTGKALNPSGEWPKSVTDTSLFTMDDQKLIENSSILVKSVSTHYDRGDFKSGIFEIMTFLYECNLYVQNQAPWKLVPKPNRVGSDLIRLNTIIYIAIEMIRITSLLLSPIIPTSSNLTLNYLSIPLENRSNPSNFKFGYNYHQNQNNLKLPKEILILFHKK</sequence>
<keyword id="KW-0030">Aminoacyl-tRNA synthetase</keyword>
<keyword id="KW-0067">ATP-binding</keyword>
<keyword id="KW-0436">Ligase</keyword>
<keyword id="KW-0496">Mitochondrion</keyword>
<keyword id="KW-0547">Nucleotide-binding</keyword>
<keyword id="KW-0648">Protein biosynthesis</keyword>
<keyword id="KW-1185">Reference proteome</keyword>
<keyword id="KW-0809">Transit peptide</keyword>
<feature type="transit peptide" description="Mitochondrion" evidence="2">
    <location>
        <begin position="1"/>
        <end status="unknown"/>
    </location>
</feature>
<feature type="chain" id="PRO_0000328568" description="Probable methionine--tRNA ligase, mitochondrial">
    <location>
        <begin status="unknown"/>
        <end position="575"/>
    </location>
</feature>
<feature type="short sequence motif" description="'HIGH' region" evidence="1">
    <location>
        <begin position="52"/>
        <end position="62"/>
    </location>
</feature>
<feature type="short sequence motif" description="'KMSKS' region" evidence="1">
    <location>
        <begin position="352"/>
        <end position="356"/>
    </location>
</feature>
<feature type="binding site" evidence="1">
    <location>
        <position position="355"/>
    </location>
    <ligand>
        <name>ATP</name>
        <dbReference type="ChEBI" id="CHEBI:30616"/>
    </ligand>
</feature>